<dbReference type="EC" id="6.1.1.15" evidence="1"/>
<dbReference type="EMBL" id="CP000686">
    <property type="protein sequence ID" value="ABQ90165.1"/>
    <property type="molecule type" value="Genomic_DNA"/>
</dbReference>
<dbReference type="RefSeq" id="WP_011956512.1">
    <property type="nucleotide sequence ID" value="NC_009523.1"/>
</dbReference>
<dbReference type="SMR" id="A5UU62"/>
<dbReference type="STRING" id="357808.RoseRS_1775"/>
<dbReference type="KEGG" id="rrs:RoseRS_1775"/>
<dbReference type="eggNOG" id="COG0442">
    <property type="taxonomic scope" value="Bacteria"/>
</dbReference>
<dbReference type="HOGENOM" id="CLU_001882_4_2_0"/>
<dbReference type="OrthoDB" id="9809052at2"/>
<dbReference type="Proteomes" id="UP000006554">
    <property type="component" value="Chromosome"/>
</dbReference>
<dbReference type="GO" id="GO:0017101">
    <property type="term" value="C:aminoacyl-tRNA synthetase multienzyme complex"/>
    <property type="evidence" value="ECO:0007669"/>
    <property type="project" value="TreeGrafter"/>
</dbReference>
<dbReference type="GO" id="GO:0005737">
    <property type="term" value="C:cytoplasm"/>
    <property type="evidence" value="ECO:0007669"/>
    <property type="project" value="UniProtKB-SubCell"/>
</dbReference>
<dbReference type="GO" id="GO:0005524">
    <property type="term" value="F:ATP binding"/>
    <property type="evidence" value="ECO:0007669"/>
    <property type="project" value="UniProtKB-UniRule"/>
</dbReference>
<dbReference type="GO" id="GO:0004827">
    <property type="term" value="F:proline-tRNA ligase activity"/>
    <property type="evidence" value="ECO:0007669"/>
    <property type="project" value="UniProtKB-UniRule"/>
</dbReference>
<dbReference type="GO" id="GO:0006433">
    <property type="term" value="P:prolyl-tRNA aminoacylation"/>
    <property type="evidence" value="ECO:0007669"/>
    <property type="project" value="UniProtKB-UniRule"/>
</dbReference>
<dbReference type="CDD" id="cd00862">
    <property type="entry name" value="ProRS_anticodon_zinc"/>
    <property type="match status" value="1"/>
</dbReference>
<dbReference type="CDD" id="cd00778">
    <property type="entry name" value="ProRS_core_arch_euk"/>
    <property type="match status" value="1"/>
</dbReference>
<dbReference type="FunFam" id="3.40.50.800:FF:000005">
    <property type="entry name" value="bifunctional glutamate/proline--tRNA ligase"/>
    <property type="match status" value="1"/>
</dbReference>
<dbReference type="FunFam" id="3.30.930.10:FF:000023">
    <property type="entry name" value="Proline--tRNA ligase"/>
    <property type="match status" value="1"/>
</dbReference>
<dbReference type="Gene3D" id="3.40.50.800">
    <property type="entry name" value="Anticodon-binding domain"/>
    <property type="match status" value="1"/>
</dbReference>
<dbReference type="Gene3D" id="3.30.930.10">
    <property type="entry name" value="Bira Bifunctional Protein, Domain 2"/>
    <property type="match status" value="1"/>
</dbReference>
<dbReference type="Gene3D" id="3.30.110.30">
    <property type="entry name" value="C-terminal domain of ProRS"/>
    <property type="match status" value="1"/>
</dbReference>
<dbReference type="HAMAP" id="MF_01571">
    <property type="entry name" value="Pro_tRNA_synth_type3"/>
    <property type="match status" value="1"/>
</dbReference>
<dbReference type="InterPro" id="IPR002314">
    <property type="entry name" value="aa-tRNA-synt_IIb"/>
</dbReference>
<dbReference type="InterPro" id="IPR006195">
    <property type="entry name" value="aa-tRNA-synth_II"/>
</dbReference>
<dbReference type="InterPro" id="IPR045864">
    <property type="entry name" value="aa-tRNA-synth_II/BPL/LPL"/>
</dbReference>
<dbReference type="InterPro" id="IPR004154">
    <property type="entry name" value="Anticodon-bd"/>
</dbReference>
<dbReference type="InterPro" id="IPR036621">
    <property type="entry name" value="Anticodon-bd_dom_sf"/>
</dbReference>
<dbReference type="InterPro" id="IPR002316">
    <property type="entry name" value="Pro-tRNA-ligase_IIa"/>
</dbReference>
<dbReference type="InterPro" id="IPR004499">
    <property type="entry name" value="Pro-tRNA-ligase_IIa_arc-type"/>
</dbReference>
<dbReference type="InterPro" id="IPR016061">
    <property type="entry name" value="Pro-tRNA_ligase_II_C"/>
</dbReference>
<dbReference type="InterPro" id="IPR017449">
    <property type="entry name" value="Pro-tRNA_synth_II"/>
</dbReference>
<dbReference type="InterPro" id="IPR033721">
    <property type="entry name" value="ProRS_core_arch_euk"/>
</dbReference>
<dbReference type="NCBIfam" id="TIGR00408">
    <property type="entry name" value="proS_fam_I"/>
    <property type="match status" value="1"/>
</dbReference>
<dbReference type="PANTHER" id="PTHR43382:SF2">
    <property type="entry name" value="BIFUNCTIONAL GLUTAMATE_PROLINE--TRNA LIGASE"/>
    <property type="match status" value="1"/>
</dbReference>
<dbReference type="PANTHER" id="PTHR43382">
    <property type="entry name" value="PROLYL-TRNA SYNTHETASE"/>
    <property type="match status" value="1"/>
</dbReference>
<dbReference type="Pfam" id="PF03129">
    <property type="entry name" value="HGTP_anticodon"/>
    <property type="match status" value="1"/>
</dbReference>
<dbReference type="Pfam" id="PF09180">
    <property type="entry name" value="ProRS-C_1"/>
    <property type="match status" value="1"/>
</dbReference>
<dbReference type="Pfam" id="PF00587">
    <property type="entry name" value="tRNA-synt_2b"/>
    <property type="match status" value="1"/>
</dbReference>
<dbReference type="PRINTS" id="PR01046">
    <property type="entry name" value="TRNASYNTHPRO"/>
</dbReference>
<dbReference type="SMART" id="SM00946">
    <property type="entry name" value="ProRS-C_1"/>
    <property type="match status" value="1"/>
</dbReference>
<dbReference type="SUPFAM" id="SSF64586">
    <property type="entry name" value="C-terminal domain of ProRS"/>
    <property type="match status" value="1"/>
</dbReference>
<dbReference type="SUPFAM" id="SSF52954">
    <property type="entry name" value="Class II aaRS ABD-related"/>
    <property type="match status" value="1"/>
</dbReference>
<dbReference type="SUPFAM" id="SSF55681">
    <property type="entry name" value="Class II aaRS and biotin synthetases"/>
    <property type="match status" value="1"/>
</dbReference>
<dbReference type="PROSITE" id="PS50862">
    <property type="entry name" value="AA_TRNA_LIGASE_II"/>
    <property type="match status" value="1"/>
</dbReference>
<name>SYP_ROSS1</name>
<reference key="1">
    <citation type="submission" date="2007-04" db="EMBL/GenBank/DDBJ databases">
        <title>Complete sequence of Roseiflexus sp. RS-1.</title>
        <authorList>
            <consortium name="US DOE Joint Genome Institute"/>
            <person name="Copeland A."/>
            <person name="Lucas S."/>
            <person name="Lapidus A."/>
            <person name="Barry K."/>
            <person name="Detter J.C."/>
            <person name="Glavina del Rio T."/>
            <person name="Hammon N."/>
            <person name="Israni S."/>
            <person name="Dalin E."/>
            <person name="Tice H."/>
            <person name="Pitluck S."/>
            <person name="Chertkov O."/>
            <person name="Brettin T."/>
            <person name="Bruce D."/>
            <person name="Han C."/>
            <person name="Schmutz J."/>
            <person name="Larimer F."/>
            <person name="Land M."/>
            <person name="Hauser L."/>
            <person name="Kyrpides N."/>
            <person name="Mikhailova N."/>
            <person name="Bryant D.A."/>
            <person name="Richardson P."/>
        </authorList>
    </citation>
    <scope>NUCLEOTIDE SEQUENCE [LARGE SCALE GENOMIC DNA]</scope>
    <source>
        <strain>RS-1</strain>
    </source>
</reference>
<gene>
    <name evidence="1" type="primary">proS</name>
    <name type="ordered locus">RoseRS_1775</name>
</gene>
<accession>A5UU62</accession>
<evidence type="ECO:0000255" key="1">
    <source>
        <dbReference type="HAMAP-Rule" id="MF_01571"/>
    </source>
</evidence>
<protein>
    <recommendedName>
        <fullName evidence="1">Proline--tRNA ligase</fullName>
        <ecNumber evidence="1">6.1.1.15</ecNumber>
    </recommendedName>
    <alternativeName>
        <fullName evidence="1">Prolyl-tRNA synthetase</fullName>
        <shortName evidence="1">ProRS</shortName>
    </alternativeName>
</protein>
<comment type="function">
    <text evidence="1">Catalyzes the attachment of proline to tRNA(Pro) in a two-step reaction: proline is first activated by ATP to form Pro-AMP and then transferred to the acceptor end of tRNA(Pro).</text>
</comment>
<comment type="catalytic activity">
    <reaction evidence="1">
        <text>tRNA(Pro) + L-proline + ATP = L-prolyl-tRNA(Pro) + AMP + diphosphate</text>
        <dbReference type="Rhea" id="RHEA:14305"/>
        <dbReference type="Rhea" id="RHEA-COMP:9700"/>
        <dbReference type="Rhea" id="RHEA-COMP:9702"/>
        <dbReference type="ChEBI" id="CHEBI:30616"/>
        <dbReference type="ChEBI" id="CHEBI:33019"/>
        <dbReference type="ChEBI" id="CHEBI:60039"/>
        <dbReference type="ChEBI" id="CHEBI:78442"/>
        <dbReference type="ChEBI" id="CHEBI:78532"/>
        <dbReference type="ChEBI" id="CHEBI:456215"/>
        <dbReference type="EC" id="6.1.1.15"/>
    </reaction>
</comment>
<comment type="subunit">
    <text evidence="1">Homodimer.</text>
</comment>
<comment type="subcellular location">
    <subcellularLocation>
        <location evidence="1">Cytoplasm</location>
    </subcellularLocation>
</comment>
<comment type="domain">
    <text evidence="1">Consists of three domains: the N-terminal catalytic domain, the anticodon-binding domain and the C-terminal extension.</text>
</comment>
<comment type="similarity">
    <text evidence="1">Belongs to the class-II aminoacyl-tRNA synthetase family. ProS type 3 subfamily.</text>
</comment>
<keyword id="KW-0030">Aminoacyl-tRNA synthetase</keyword>
<keyword id="KW-0067">ATP-binding</keyword>
<keyword id="KW-0963">Cytoplasm</keyword>
<keyword id="KW-0436">Ligase</keyword>
<keyword id="KW-0547">Nucleotide-binding</keyword>
<keyword id="KW-0648">Protein biosynthesis</keyword>
<proteinExistence type="inferred from homology"/>
<sequence>MPKEGITPRAQDYSQWYLDIVQQADLADYAEVVKGCIVFKPTGYAIWEAIQRGLDDRIKATGHVNAYFPLLIPKSFLMKEAEHVEGFAPEVAEVTRAGGEDLAEPYVIRPTSETIIGYFYSKWVRSYRDLPLLINQWANVMRWEMRTRPFLRTTEFLWQEGHTVHATEEDAERETLLILHEVYADFVEKEMAIPVIKGLKSEKEKFPGALRSYCIEAMMQDGRALQAGTSHNLGQNFARAFDITYTDQQNTIQYAWTTSWGVSTRLIGALIMTHSDDEGLVIPPRLAPTQVVVVPIYRNDAERSVVMEAVQRMTAEWKGRLRFKIDDRDNLTPGFKFNEWELKGVPIRVEIGPKDIEKGSVAIARRDQPGREGKSFVPQDGLTDRLTALLEEIQQALYRRALTFREDHTADVATYDELKQQVERGFARCYWAGTTEDEKRIQEETRATIRCIPLDQPQQAGRCVYTGKETTQQVIFARAY</sequence>
<organism>
    <name type="scientific">Roseiflexus sp. (strain RS-1)</name>
    <dbReference type="NCBI Taxonomy" id="357808"/>
    <lineage>
        <taxon>Bacteria</taxon>
        <taxon>Bacillati</taxon>
        <taxon>Chloroflexota</taxon>
        <taxon>Chloroflexia</taxon>
        <taxon>Chloroflexales</taxon>
        <taxon>Roseiflexineae</taxon>
        <taxon>Roseiflexaceae</taxon>
        <taxon>Roseiflexus</taxon>
    </lineage>
</organism>
<feature type="chain" id="PRO_1000069196" description="Proline--tRNA ligase">
    <location>
        <begin position="1"/>
        <end position="480"/>
    </location>
</feature>